<evidence type="ECO:0000250" key="1">
    <source>
        <dbReference type="UniProtKB" id="O14230"/>
    </source>
</evidence>
<evidence type="ECO:0000250" key="2">
    <source>
        <dbReference type="UniProtKB" id="P14324"/>
    </source>
</evidence>
<evidence type="ECO:0000250" key="3">
    <source>
        <dbReference type="UniProtKB" id="Q12051"/>
    </source>
</evidence>
<evidence type="ECO:0000269" key="4">
    <source>
    </source>
</evidence>
<evidence type="ECO:0000269" key="5">
    <source>
    </source>
</evidence>
<evidence type="ECO:0000269" key="6">
    <source>
    </source>
</evidence>
<evidence type="ECO:0000269" key="7">
    <source>
    </source>
</evidence>
<evidence type="ECO:0000269" key="8">
    <source>
    </source>
</evidence>
<evidence type="ECO:0000269" key="9">
    <source ref="10"/>
</evidence>
<evidence type="ECO:0000269" key="10">
    <source ref="7"/>
</evidence>
<evidence type="ECO:0000269" key="11">
    <source ref="9"/>
</evidence>
<evidence type="ECO:0000303" key="12">
    <source>
    </source>
</evidence>
<evidence type="ECO:0000303" key="13">
    <source>
    </source>
</evidence>
<evidence type="ECO:0000303" key="14">
    <source>
    </source>
</evidence>
<evidence type="ECO:0000303" key="15">
    <source>
    </source>
</evidence>
<evidence type="ECO:0000303" key="16">
    <source>
    </source>
</evidence>
<evidence type="ECO:0000303" key="17">
    <source>
    </source>
</evidence>
<evidence type="ECO:0000303" key="18">
    <source>
    </source>
</evidence>
<evidence type="ECO:0000305" key="19"/>
<evidence type="ECO:0000312" key="20">
    <source>
        <dbReference type="EMBL" id="PWA94011.1"/>
    </source>
</evidence>
<proteinExistence type="evidence at protein level"/>
<dbReference type="EC" id="2.5.1.10" evidence="8 10"/>
<dbReference type="EC" id="2.5.1.1" evidence="8"/>
<dbReference type="EMBL" id="U36376">
    <property type="protein sequence ID" value="AAC49452.1"/>
    <property type="molecule type" value="mRNA"/>
</dbReference>
<dbReference type="EMBL" id="AF136602">
    <property type="protein sequence ID" value="AAD32648.1"/>
    <property type="molecule type" value="mRNA"/>
</dbReference>
<dbReference type="EMBL" id="AF112881">
    <property type="protein sequence ID" value="AAD17204.1"/>
    <property type="molecule type" value="mRNA"/>
</dbReference>
<dbReference type="EMBL" id="GQ420346">
    <property type="protein sequence ID" value="ADJ67472.1"/>
    <property type="molecule type" value="mRNA"/>
</dbReference>
<dbReference type="EMBL" id="KJ609177">
    <property type="protein sequence ID" value="AIC83778.1"/>
    <property type="molecule type" value="mRNA"/>
</dbReference>
<dbReference type="EMBL" id="PKPP01000340">
    <property type="protein sequence ID" value="PWA94011.1"/>
    <property type="molecule type" value="Genomic_DNA"/>
</dbReference>
<dbReference type="PIR" id="JC4846">
    <property type="entry name" value="JC4846"/>
</dbReference>
<dbReference type="SMR" id="P49350"/>
<dbReference type="STRING" id="35608.P49350"/>
<dbReference type="OrthoDB" id="10257492at2759"/>
<dbReference type="BioCyc" id="MetaCyc:MONOMER-17882"/>
<dbReference type="UniPathway" id="UPA00259">
    <property type="reaction ID" value="UER00368"/>
</dbReference>
<dbReference type="UniPathway" id="UPA00260">
    <property type="reaction ID" value="UER00369"/>
</dbReference>
<dbReference type="Proteomes" id="UP000245207">
    <property type="component" value="Unassembled WGS sequence"/>
</dbReference>
<dbReference type="GO" id="GO:0005737">
    <property type="term" value="C:cytoplasm"/>
    <property type="evidence" value="ECO:0007669"/>
    <property type="project" value="UniProtKB-SubCell"/>
</dbReference>
<dbReference type="GO" id="GO:0005634">
    <property type="term" value="C:nucleus"/>
    <property type="evidence" value="ECO:0007669"/>
    <property type="project" value="UniProtKB-SubCell"/>
</dbReference>
<dbReference type="GO" id="GO:0004337">
    <property type="term" value="F:(2E,6E)-farnesyl diphosphate synthase activity"/>
    <property type="evidence" value="ECO:0007669"/>
    <property type="project" value="UniProtKB-EC"/>
</dbReference>
<dbReference type="GO" id="GO:0004161">
    <property type="term" value="F:dimethylallyltranstransferase activity"/>
    <property type="evidence" value="ECO:0007669"/>
    <property type="project" value="UniProtKB-EC"/>
</dbReference>
<dbReference type="GO" id="GO:0046872">
    <property type="term" value="F:metal ion binding"/>
    <property type="evidence" value="ECO:0007669"/>
    <property type="project" value="UniProtKB-KW"/>
</dbReference>
<dbReference type="GO" id="GO:0006695">
    <property type="term" value="P:cholesterol biosynthetic process"/>
    <property type="evidence" value="ECO:0007669"/>
    <property type="project" value="UniProtKB-KW"/>
</dbReference>
<dbReference type="GO" id="GO:0045337">
    <property type="term" value="P:farnesyl diphosphate biosynthetic process"/>
    <property type="evidence" value="ECO:0007669"/>
    <property type="project" value="UniProtKB-UniPathway"/>
</dbReference>
<dbReference type="GO" id="GO:0033384">
    <property type="term" value="P:geranyl diphosphate biosynthetic process"/>
    <property type="evidence" value="ECO:0007669"/>
    <property type="project" value="UniProtKB-UniPathway"/>
</dbReference>
<dbReference type="GO" id="GO:0009739">
    <property type="term" value="P:response to gibberellin"/>
    <property type="evidence" value="ECO:0000270"/>
    <property type="project" value="UniProtKB"/>
</dbReference>
<dbReference type="CDD" id="cd00685">
    <property type="entry name" value="Trans_IPPS_HT"/>
    <property type="match status" value="1"/>
</dbReference>
<dbReference type="FunFam" id="1.10.600.10:FF:000008">
    <property type="entry name" value="Farnesyl pyrophosphate synthase"/>
    <property type="match status" value="1"/>
</dbReference>
<dbReference type="Gene3D" id="1.10.600.10">
    <property type="entry name" value="Farnesyl Diphosphate Synthase"/>
    <property type="match status" value="1"/>
</dbReference>
<dbReference type="InterPro" id="IPR039702">
    <property type="entry name" value="FPS1-like"/>
</dbReference>
<dbReference type="InterPro" id="IPR008949">
    <property type="entry name" value="Isoprenoid_synthase_dom_sf"/>
</dbReference>
<dbReference type="InterPro" id="IPR000092">
    <property type="entry name" value="Polyprenyl_synt"/>
</dbReference>
<dbReference type="InterPro" id="IPR033749">
    <property type="entry name" value="Polyprenyl_synt_CS"/>
</dbReference>
<dbReference type="PANTHER" id="PTHR11525:SF0">
    <property type="entry name" value="FARNESYL PYROPHOSPHATE SYNTHASE"/>
    <property type="match status" value="1"/>
</dbReference>
<dbReference type="PANTHER" id="PTHR11525">
    <property type="entry name" value="FARNESYL-PYROPHOSPHATE SYNTHETASE"/>
    <property type="match status" value="1"/>
</dbReference>
<dbReference type="Pfam" id="PF00348">
    <property type="entry name" value="polyprenyl_synt"/>
    <property type="match status" value="1"/>
</dbReference>
<dbReference type="SFLD" id="SFLDS00005">
    <property type="entry name" value="Isoprenoid_Synthase_Type_I"/>
    <property type="match status" value="1"/>
</dbReference>
<dbReference type="SFLD" id="SFLDG01017">
    <property type="entry name" value="Polyprenyl_Transferase_Like"/>
    <property type="match status" value="1"/>
</dbReference>
<dbReference type="SUPFAM" id="SSF48576">
    <property type="entry name" value="Terpenoid synthases"/>
    <property type="match status" value="1"/>
</dbReference>
<dbReference type="PROSITE" id="PS00723">
    <property type="entry name" value="POLYPRENYL_SYNTHASE_1"/>
    <property type="match status" value="1"/>
</dbReference>
<dbReference type="PROSITE" id="PS00444">
    <property type="entry name" value="POLYPRENYL_SYNTHASE_2"/>
    <property type="match status" value="1"/>
</dbReference>
<keyword id="KW-0152">Cholesterol biosynthesis</keyword>
<keyword id="KW-0153">Cholesterol metabolism</keyword>
<keyword id="KW-0963">Cytoplasm</keyword>
<keyword id="KW-0414">Isoprene biosynthesis</keyword>
<keyword id="KW-0444">Lipid biosynthesis</keyword>
<keyword id="KW-0443">Lipid metabolism</keyword>
<keyword id="KW-0460">Magnesium</keyword>
<keyword id="KW-0479">Metal-binding</keyword>
<keyword id="KW-0539">Nucleus</keyword>
<keyword id="KW-1185">Reference proteome</keyword>
<keyword id="KW-0752">Steroid biosynthesis</keyword>
<keyword id="KW-0753">Steroid metabolism</keyword>
<keyword id="KW-0756">Sterol biosynthesis</keyword>
<keyword id="KW-1207">Sterol metabolism</keyword>
<keyword id="KW-0808">Transferase</keyword>
<reference key="1">
    <citation type="journal article" date="1996" name="Gene">
        <title>Cloning and analysis of a cDNA encoding farnesyl diphosphate synthase from Artemisia annua.</title>
        <authorList>
            <person name="Matsushita Y."/>
            <person name="Kang W."/>
            <person name="Charlwood B.V."/>
        </authorList>
    </citation>
    <scope>NUCLEOTIDE SEQUENCE [MRNA]</scope>
    <scope>FUNCTION</scope>
    <scope>CATALYTIC ACTIVITY</scope>
    <scope>PATHWAY</scope>
</reference>
<reference key="2">
    <citation type="submission" date="1999-03" db="EMBL/GenBank/DDBJ databases">
        <authorList>
            <person name="Chen D."/>
            <person name="Ye H.C."/>
            <person name="Li G.F."/>
        </authorList>
    </citation>
    <scope>NUCLEOTIDE SEQUENCE [MRNA]</scope>
</reference>
<reference key="3">
    <citation type="journal article" date="2000" name="Plant Sci.">
        <title>Expression of a chimeric farnesyl diphosphate synthase gene in Artemisia annua L. transgenic plants via Agrobacterium tumefaciens-mediated transformation.</title>
        <authorList>
            <person name="Chen D.-H."/>
            <person name="Ye H.-C."/>
            <person name="Li G.-F."/>
        </authorList>
    </citation>
    <scope>NUCLEOTIDE SEQUENCE [MRNA]</scope>
    <scope>FUNCTION</scope>
    <scope>BIOTECHNOLOGY</scope>
</reference>
<reference key="4">
    <citation type="submission" date="2009-07" db="EMBL/GenBank/DDBJ databases">
        <authorList>
            <person name="Banyai W."/>
            <person name="Supaibulwatana K."/>
        </authorList>
    </citation>
    <scope>NUCLEOTIDE SEQUENCE [MRNA]</scope>
</reference>
<reference key="5">
    <citation type="submission" date="2014-03" db="EMBL/GenBank/DDBJ databases">
        <title>Molecular cloning of farnesyl pyrophosphate synthase (FPS).</title>
        <authorList>
            <person name="Sankhuan D."/>
            <person name="Chowpongpang S."/>
            <person name="Kirdmanee C."/>
            <person name="Supaibulwatana K."/>
        </authorList>
    </citation>
    <scope>NUCLEOTIDE SEQUENCE [MRNA]</scope>
</reference>
<reference key="6">
    <citation type="journal article" date="2018" name="Mol. Plant">
        <title>The genome of Artemisia annua provides insight into the evolution of Asteraceae family and artemisinin biosynthesis.</title>
        <authorList>
            <person name="Shen Q."/>
            <person name="Zhang L."/>
            <person name="Liao Z."/>
            <person name="Wang S."/>
            <person name="Yan T."/>
            <person name="Shi P."/>
            <person name="Liu M."/>
            <person name="Fu X."/>
            <person name="Pan Q."/>
            <person name="Wang Y."/>
            <person name="Lv Z."/>
            <person name="Lu X."/>
            <person name="Zhang F."/>
            <person name="Jiang W."/>
            <person name="Ma Y."/>
            <person name="Chen M."/>
            <person name="Hao X."/>
            <person name="Li L."/>
            <person name="Tang Y."/>
            <person name="Lv G."/>
            <person name="Zhou Y."/>
            <person name="Sun X."/>
            <person name="Brodelius P.E."/>
            <person name="Rose J.K.C."/>
            <person name="Tang K."/>
        </authorList>
    </citation>
    <scope>NUCLEOTIDE SEQUENCE [LARGE SCALE GENOMIC DNA]</scope>
    <source>
        <strain>cv. Huhao1</strain>
        <tissue>Leaf</tissue>
    </source>
</reference>
<reference key="7">
    <citation type="journal article" date="2006" name="J. Integr. Plant Biol.">
        <title>Effects of overexpression of the endogenous farnesyl diphosphate synthase on the artemisinin content in Artemisia annua L.</title>
        <authorList>
            <person name="Han J.-L."/>
            <person name="Liu B.-Y."/>
            <person name="Ye H.-C."/>
            <person name="Wang H."/>
            <person name="Li Z.-Q."/>
            <person name="Li G.-F."/>
        </authorList>
    </citation>
    <scope>FUNCTION</scope>
    <scope>CATALYTIC ACTIVITY</scope>
    <scope>BIOTECHNOLOGY</scope>
    <scope>PATHWAY</scope>
</reference>
<reference key="8">
    <citation type="journal article" date="2009" name="Phytochemistry">
        <title>Localization of enzymes of artemisinin biosynthesis to the apical cells of glandular secretory trichomes of Artemisia annua L.</title>
        <authorList>
            <person name="Olsson M.E."/>
            <person name="Olofsson L.M."/>
            <person name="Lindahl A.-L."/>
            <person name="Lundgren A."/>
            <person name="Brodelius M."/>
            <person name="Brodelius P.E."/>
        </authorList>
    </citation>
    <scope>TISSUE SPECIFICITY</scope>
</reference>
<reference key="9">
    <citation type="journal article" date="2010" name="Plant Cell Tissue Organ Cult.">
        <title>Overexpression of farnesyl pyrophosphate synthase (FPS) gene affected artemisinin content and growth of Artemisia annua L.</title>
        <authorList>
            <person name="Banyai W."/>
            <person name="Kirdmanee C."/>
            <person name="Mii M."/>
            <person name="Supaibulwatana K."/>
        </authorList>
    </citation>
    <scope>FUNCTION</scope>
    <scope>DISRUPTION PHENOTYPE</scope>
    <scope>BIOTECHNOLOGY</scope>
</reference>
<reference key="10">
    <citation type="journal article" date="2011" name="Plant Growth Regul.">
        <title>Enhancement of artemisinin content and biomass in Artemisia annua by exogenous GA3 treatment.</title>
        <authorList>
            <person name="Banyai W."/>
            <person name="Mii M."/>
            <person name="Supaibulwatana K."/>
        </authorList>
    </citation>
    <scope>INDUCTION BY GIBBERELLIC ACID</scope>
</reference>
<reference key="11">
    <citation type="journal article" date="2012" name="Plant Sci.">
        <title>Trichome isolation with and without fixation using laser microdissection and pressure catapulting followed by RNA amplification: expression of genes of terpene metabolism in apical and sub-apical trichome cells of Artemisia annua L.</title>
        <authorList>
            <person name="Olofsson L."/>
            <person name="Lundgren A."/>
            <person name="Brodelius P.E."/>
        </authorList>
    </citation>
    <scope>TISSUE SPECIFICITY</scope>
</reference>
<reference key="12">
    <citation type="journal article" date="2014" name="Nat. Prod. Commun.">
        <title>T-DNA insertion alters the terpenoid content composition and bioactivity of transgenic Artemisia annua.</title>
        <authorList>
            <person name="Karaket N."/>
            <person name="Wiyakrutta S."/>
            <person name="Lacaille-Dubois M.-A."/>
            <person name="Supaibulwatana K."/>
        </authorList>
    </citation>
    <scope>FUNCTION</scope>
</reference>
<reference key="13">
    <citation type="journal article" date="2016" name="Angew. Chem. Int. Ed.">
        <title>Artemisinin-A Gift from Traditional Chinese Medicine to the World (Nobel Lecture).</title>
        <authorList>
            <person name="Tu Y."/>
        </authorList>
    </citation>
    <scope>REVIEW ON ARTEMISININ ANTIMALARIAL PROPERTIES</scope>
</reference>
<reference key="14">
    <citation type="journal article" date="2019" name="Nat. Prod. Rep.">
        <title>Non-volatile natural products in plant glandular trichomes: chemistry, biological activities and biosynthesis.</title>
        <authorList>
            <person name="Liu Y."/>
            <person name="Jing S.-X."/>
            <person name="Luo S.-H."/>
            <person name="Li S.-H."/>
        </authorList>
    </citation>
    <scope>PATHWAY</scope>
    <scope>REVIEW</scope>
</reference>
<reference key="15">
    <citation type="journal article" date="2020" name="Chin. Med. J.">
        <title>Artesunate: could be an alternative drug to chloroquine in COVID-19 treatment?</title>
        <authorList>
            <person name="Uzun T."/>
            <person name="Toptas O."/>
        </authorList>
    </citation>
    <scope>BIOTECHNOLOGY</scope>
</reference>
<reference key="16">
    <citation type="journal article" date="2020" name="Pharmacol. Res.">
        <title>Anti-malarial drug, artemisinin and its derivatives for the treatment of respiratory diseases.</title>
        <authorList>
            <person name="Cheong D.H.J."/>
            <person name="Tan D.W.S."/>
            <person name="Wong F.W.S."/>
            <person name="Tran T."/>
        </authorList>
    </citation>
    <scope>BIOTECHNOLOGY</scope>
    <scope>REVIEW</scope>
</reference>
<comment type="function">
    <text evidence="4 7 8 10 11 14">Involved in the biosynthesis of the antimalarial endoperoxide artemisinin (PubMed:10814821, PubMed:24689216, PubMed:27488942, Ref.7, Ref.9). Catalyzes the sequential condensation of isopentenyl pyrophosphate with the allylic pyrophosphates, dimethylallyl pyrophosphate, and then with the resultant geranylpyrophosphate to the ultimate product farnesyl pyrophosphate (PubMed:8682304). Promotes anti-malarial and antimicrobial (toward Gram-positive bacteria B.subtilis and S.aureus) activities of plant crude extract probably by triggering artemisinin levels (PubMed:24689216).</text>
</comment>
<comment type="catalytic activity">
    <reaction evidence="8">
        <text>isopentenyl diphosphate + dimethylallyl diphosphate = (2E)-geranyl diphosphate + diphosphate</text>
        <dbReference type="Rhea" id="RHEA:22408"/>
        <dbReference type="ChEBI" id="CHEBI:33019"/>
        <dbReference type="ChEBI" id="CHEBI:57623"/>
        <dbReference type="ChEBI" id="CHEBI:58057"/>
        <dbReference type="ChEBI" id="CHEBI:128769"/>
        <dbReference type="EC" id="2.5.1.1"/>
    </reaction>
    <physiologicalReaction direction="left-to-right" evidence="8">
        <dbReference type="Rhea" id="RHEA:22409"/>
    </physiologicalReaction>
</comment>
<comment type="catalytic activity">
    <reaction evidence="8 10">
        <text>isopentenyl diphosphate + (2E)-geranyl diphosphate = (2E,6E)-farnesyl diphosphate + diphosphate</text>
        <dbReference type="Rhea" id="RHEA:19361"/>
        <dbReference type="ChEBI" id="CHEBI:33019"/>
        <dbReference type="ChEBI" id="CHEBI:58057"/>
        <dbReference type="ChEBI" id="CHEBI:128769"/>
        <dbReference type="ChEBI" id="CHEBI:175763"/>
        <dbReference type="EC" id="2.5.1.10"/>
    </reaction>
    <physiologicalReaction direction="left-to-right" evidence="8 10">
        <dbReference type="Rhea" id="RHEA:19362"/>
    </physiologicalReaction>
</comment>
<comment type="cofactor">
    <cofactor evidence="3">
        <name>Mg(2+)</name>
        <dbReference type="ChEBI" id="CHEBI:18420"/>
    </cofactor>
    <text evidence="3">Binds 2 Mg(2+) ions per subunit.</text>
</comment>
<comment type="pathway">
    <text evidence="8 10">Isoprenoid biosynthesis; farnesyl diphosphate biosynthesis; farnesyl diphosphate from geranyl diphosphate and isopentenyl diphosphate: step 1/1.</text>
</comment>
<comment type="pathway">
    <text evidence="15">Sesquiterpene biosynthesis.</text>
</comment>
<comment type="pathway">
    <text evidence="8">Isoprenoid biosynthesis; geranyl diphosphate biosynthesis; geranyl diphosphate from dimethylallyl diphosphate and isopentenyl diphosphate: step 1/1.</text>
</comment>
<comment type="subcellular location">
    <subcellularLocation>
        <location evidence="1">Cytoplasm</location>
    </subcellularLocation>
    <subcellularLocation>
        <location evidence="1">Nucleus</location>
    </subcellularLocation>
</comment>
<comment type="tissue specificity">
    <text evidence="5 6">Expressed both in apical and sub-apical cells of glandular secretory trichomes.</text>
</comment>
<comment type="induction">
    <text evidence="9">Strongly induced by gibberellic acid (GA(3)) leading to an increased artemisinin yield.</text>
</comment>
<comment type="disruption phenotype">
    <text evidence="11">Reduced growth and lower artemisinin levels.</text>
</comment>
<comment type="biotechnology">
    <text evidence="16 17">Artemisinin and derivatives (e.g. artesunate), are antimalarial drugs due to their endoperoxidase properties; they also display multiple pharmacological actions against inflammation,viral infections, and cell and tumor proliferation (PubMed:32405226, PubMed:32514287). Artesunate may be a promising treatment for COVID-19 mediated by the severe acute respiratory syndrome coronavirus 2 (2019-nCoV) (SARS-CoV-2) because of its anti-inflammatory activity, NF-kappaB (nuclear factor kappa B)-coronavirus effect and chloroquine-like endocytosis inhibition mechanism (PubMed:32405226, PubMed:32514287).</text>
</comment>
<comment type="biotechnology">
    <text evidence="4 10 11">Plants overexpressing FPS1 accumulate higher levels of artemisinin.</text>
</comment>
<comment type="similarity">
    <text evidence="19">Belongs to the FPP/GGPP synthase family.</text>
</comment>
<accession>P49350</accession>
<accession>A0A2U1Q7M0</accession>
<accession>E2D028</accession>
<accession>Q9SYX3</accession>
<accession>Q9ZPJ3</accession>
<organism>
    <name type="scientific">Artemisia annua</name>
    <name type="common">Sweet wormwood</name>
    <dbReference type="NCBI Taxonomy" id="35608"/>
    <lineage>
        <taxon>Eukaryota</taxon>
        <taxon>Viridiplantae</taxon>
        <taxon>Streptophyta</taxon>
        <taxon>Embryophyta</taxon>
        <taxon>Tracheophyta</taxon>
        <taxon>Spermatophyta</taxon>
        <taxon>Magnoliopsida</taxon>
        <taxon>eudicotyledons</taxon>
        <taxon>Gunneridae</taxon>
        <taxon>Pentapetalae</taxon>
        <taxon>asterids</taxon>
        <taxon>campanulids</taxon>
        <taxon>Asterales</taxon>
        <taxon>Asteraceae</taxon>
        <taxon>Asteroideae</taxon>
        <taxon>Anthemideae</taxon>
        <taxon>Artemisiinae</taxon>
        <taxon>Artemisia</taxon>
    </lineage>
</organism>
<name>FPPS_ARTAN</name>
<gene>
    <name evidence="18" type="primary">FPS1</name>
    <name evidence="12" type="synonym">FDS</name>
    <name evidence="13" type="synonym">FPPS</name>
    <name evidence="20" type="ORF">CTI12_AA043570</name>
</gene>
<feature type="chain" id="PRO_0000123954" description="Farnesyl pyrophosphate synthase">
    <location>
        <begin position="1"/>
        <end position="343"/>
    </location>
</feature>
<feature type="binding site" evidence="2">
    <location>
        <position position="49"/>
    </location>
    <ligand>
        <name>isopentenyl diphosphate</name>
        <dbReference type="ChEBI" id="CHEBI:128769"/>
    </ligand>
</feature>
<feature type="binding site" evidence="2">
    <location>
        <position position="52"/>
    </location>
    <ligand>
        <name>isopentenyl diphosphate</name>
        <dbReference type="ChEBI" id="CHEBI:128769"/>
    </ligand>
</feature>
<feature type="binding site" evidence="2">
    <location>
        <position position="87"/>
    </location>
    <ligand>
        <name>isopentenyl diphosphate</name>
        <dbReference type="ChEBI" id="CHEBI:128769"/>
    </ligand>
</feature>
<feature type="binding site" evidence="2">
    <location>
        <position position="94"/>
    </location>
    <ligand>
        <name>Mg(2+)</name>
        <dbReference type="ChEBI" id="CHEBI:18420"/>
        <label>1</label>
    </ligand>
</feature>
<feature type="binding site" evidence="2">
    <location>
        <position position="94"/>
    </location>
    <ligand>
        <name>Mg(2+)</name>
        <dbReference type="ChEBI" id="CHEBI:18420"/>
        <label>2</label>
    </ligand>
</feature>
<feature type="binding site" evidence="2">
    <location>
        <position position="98"/>
    </location>
    <ligand>
        <name>Mg(2+)</name>
        <dbReference type="ChEBI" id="CHEBI:18420"/>
        <label>1</label>
    </ligand>
</feature>
<feature type="binding site" evidence="2">
    <location>
        <position position="98"/>
    </location>
    <ligand>
        <name>Mg(2+)</name>
        <dbReference type="ChEBI" id="CHEBI:18420"/>
        <label>2</label>
    </ligand>
</feature>
<feature type="binding site" evidence="3">
    <location>
        <position position="103"/>
    </location>
    <ligand>
        <name>dimethylallyl diphosphate</name>
        <dbReference type="ChEBI" id="CHEBI:57623"/>
    </ligand>
</feature>
<feature type="binding site" evidence="2">
    <location>
        <position position="104"/>
    </location>
    <ligand>
        <name>isopentenyl diphosphate</name>
        <dbReference type="ChEBI" id="CHEBI:128769"/>
    </ligand>
</feature>
<feature type="binding site" evidence="3">
    <location>
        <position position="191"/>
    </location>
    <ligand>
        <name>dimethylallyl diphosphate</name>
        <dbReference type="ChEBI" id="CHEBI:57623"/>
    </ligand>
</feature>
<feature type="binding site" evidence="3">
    <location>
        <position position="192"/>
    </location>
    <ligand>
        <name>dimethylallyl diphosphate</name>
        <dbReference type="ChEBI" id="CHEBI:57623"/>
    </ligand>
</feature>
<feature type="binding site" evidence="3">
    <location>
        <position position="230"/>
    </location>
    <ligand>
        <name>dimethylallyl diphosphate</name>
        <dbReference type="ChEBI" id="CHEBI:57623"/>
    </ligand>
</feature>
<feature type="binding site" evidence="3">
    <location>
        <position position="247"/>
    </location>
    <ligand>
        <name>dimethylallyl diphosphate</name>
        <dbReference type="ChEBI" id="CHEBI:57623"/>
    </ligand>
</feature>
<feature type="binding site" evidence="3">
    <location>
        <position position="256"/>
    </location>
    <ligand>
        <name>dimethylallyl diphosphate</name>
        <dbReference type="ChEBI" id="CHEBI:57623"/>
    </ligand>
</feature>
<feature type="sequence conflict" description="In Ref. 1; AAC49452." evidence="19" ref="1">
    <original>I</original>
    <variation>T</variation>
    <location>
        <position position="4"/>
    </location>
</feature>
<feature type="sequence conflict" description="In Ref. 4; ADJ67472 and 5; AIC83778." evidence="19" ref="4 5">
    <original>V</original>
    <variation>I</variation>
    <location>
        <position position="45"/>
    </location>
</feature>
<feature type="sequence conflict" description="In Ref. 3; AAD17204, 4; ADJ67472, 5; AIC83778 and 2; AAD32648." evidence="19" ref="3 4 5 2">
    <original>P</original>
    <variation>L</variation>
    <location>
        <position position="113"/>
    </location>
</feature>
<feature type="sequence conflict" description="In Ref. 4; ADJ67472 and 5; AIC83778." evidence="19" ref="4 5">
    <original>V</original>
    <variation>E</variation>
    <location>
        <position position="145"/>
    </location>
</feature>
<feature type="sequence conflict" description="In Ref. 2; AAD32648." evidence="19" ref="2">
    <original>VEF</original>
    <variation>GVI</variation>
    <location>
        <begin position="154"/>
        <end position="156"/>
    </location>
</feature>
<feature type="sequence conflict" description="In Ref. 2; AAD32648." evidence="19" ref="2">
    <original>T</original>
    <variation>P</variation>
    <location>
        <position position="168"/>
    </location>
</feature>
<feature type="sequence conflict" description="In Ref. 3; AAD17204, 4; ADJ67472, 5; AIC83778 and 2; AAD32648." evidence="19" ref="3 4 5 2">
    <original>V</original>
    <variation>M</variation>
    <location>
        <position position="221"/>
    </location>
</feature>
<feature type="sequence conflict" description="In Ref. 1; AAC49452." evidence="19" ref="1">
    <original>A</original>
    <variation>P</variation>
    <location>
        <position position="268"/>
    </location>
</feature>
<feature type="sequence conflict" description="In Ref. 1; AAC49452." evidence="19" ref="1">
    <original>V</original>
    <variation>T</variation>
    <location>
        <position position="275"/>
    </location>
</feature>
<feature type="sequence conflict" description="In Ref. 3; AAD17204, 4; ADJ67472, 5; AIC83778 and 2; AAD32648." evidence="19" ref="3 4 5 2">
    <original>H</original>
    <variation>R</variation>
    <location>
        <position position="322"/>
    </location>
</feature>
<protein>
    <recommendedName>
        <fullName>Farnesyl pyrophosphate synthase</fullName>
        <shortName evidence="18">FPP synthase</shortName>
        <shortName evidence="18">FPS</shortName>
        <ecNumber evidence="8 10">2.5.1.10</ecNumber>
    </recommendedName>
    <alternativeName>
        <fullName evidence="12">(2E,6E)-farnesyl diphosphate synthase</fullName>
    </alternativeName>
    <alternativeName>
        <fullName>Dimethylallyltranstransferase</fullName>
        <ecNumber evidence="8">2.5.1.1</ecNumber>
    </alternativeName>
    <alternativeName>
        <fullName evidence="18">Farnesyl diphosphate synthase</fullName>
    </alternativeName>
    <alternativeName>
        <fullName>Geranyltranstransferase</fullName>
    </alternativeName>
</protein>
<sequence length="343" mass="39404">MSSIDLKSKFLKVYDTLKSELINDPAFEFDDDSRQWIEKMLDYNVPGGKLNRGLSVVDSYQLLKGGELSDDEIFLSSALGWCIEWLQAYFLVLDDIMDESHTRRGQPCWFRLPKVGMIAANDGILLRNHVPRILKKHFRGKPYYVDLVDLFNEVEFQTASGQMIDLITTLVGEKDLSKYSLSIHRRIVQYKTAYYSFYLPVACALLMFGEDLDKHVEVKNVLVEMGTYFQVQDDYLDCFGAPEVIGKIGTDIEDFKCSWLVVKALELANEEQKKVLHENYGKKDPASVAKVKEVYHTLNLQAVFEDYEATSYKKLITSIENHPSKAVQAVLKSFLGKIYKRQK</sequence>